<proteinExistence type="evidence at transcript level"/>
<feature type="chain" id="PRO_0000191582" description="Sperm protamine P1">
    <location>
        <begin position="1"/>
        <end position="51"/>
    </location>
</feature>
<feature type="sequence variant" description="In strain: Isolate NL1.">
    <original>Q</original>
    <variation>R</variation>
    <location>
        <position position="28"/>
    </location>
</feature>
<evidence type="ECO:0000250" key="1"/>
<evidence type="ECO:0000305" key="2"/>
<reference key="1">
    <citation type="submission" date="2000-08" db="EMBL/GenBank/DDBJ databases">
        <title>Molecular systematics of the langurs.</title>
        <authorList>
            <person name="Karanth P.K."/>
            <person name="Singh L."/>
            <person name="Stewart C.-B."/>
        </authorList>
    </citation>
    <scope>NUCLEOTIDE SEQUENCE [GENOMIC DNA]</scope>
    <source>
        <strain>Isolate NL1</strain>
        <strain>Isolate NL2</strain>
    </source>
</reference>
<accession>Q8MJS8</accession>
<accession>Q8MJS9</accession>
<sequence>MARYRRCRSQSRSRCCRPRRRCRRRRRQSCRARRRATRCCRRRYRLRCRRY</sequence>
<protein>
    <recommendedName>
        <fullName>Sperm protamine P1</fullName>
    </recommendedName>
</protein>
<comment type="function">
    <text evidence="1">Protamines substitute for histones in the chromatin of sperm during the haploid phase of spermatogenesis. They compact sperm DNA into a highly condensed, stable and inactive complex (By similarity).</text>
</comment>
<comment type="subcellular location">
    <subcellularLocation>
        <location evidence="1">Nucleus</location>
    </subcellularLocation>
    <subcellularLocation>
        <location evidence="1">Chromosome</location>
    </subcellularLocation>
</comment>
<comment type="tissue specificity">
    <text>Testis.</text>
</comment>
<comment type="similarity">
    <text evidence="2">Belongs to the protamine P1 family.</text>
</comment>
<name>HSP1_TRAJO</name>
<organism>
    <name type="scientific">Trachypithecus johnii</name>
    <name type="common">Nilgiri langur</name>
    <name type="synonym">Semnopithecus johnii</name>
    <dbReference type="NCBI Taxonomy" id="66063"/>
    <lineage>
        <taxon>Eukaryota</taxon>
        <taxon>Metazoa</taxon>
        <taxon>Chordata</taxon>
        <taxon>Craniata</taxon>
        <taxon>Vertebrata</taxon>
        <taxon>Euteleostomi</taxon>
        <taxon>Mammalia</taxon>
        <taxon>Eutheria</taxon>
        <taxon>Euarchontoglires</taxon>
        <taxon>Primates</taxon>
        <taxon>Haplorrhini</taxon>
        <taxon>Catarrhini</taxon>
        <taxon>Cercopithecidae</taxon>
        <taxon>Colobinae</taxon>
        <taxon>Trachypithecus</taxon>
    </lineage>
</organism>
<keyword id="KW-0158">Chromosome</keyword>
<keyword id="KW-0217">Developmental protein</keyword>
<keyword id="KW-0221">Differentiation</keyword>
<keyword id="KW-0226">DNA condensation</keyword>
<keyword id="KW-0238">DNA-binding</keyword>
<keyword id="KW-0544">Nucleosome core</keyword>
<keyword id="KW-0539">Nucleus</keyword>
<keyword id="KW-0744">Spermatogenesis</keyword>
<dbReference type="EMBL" id="AF294853">
    <property type="protein sequence ID" value="AAM68936.1"/>
    <property type="molecule type" value="Genomic_DNA"/>
</dbReference>
<dbReference type="EMBL" id="AF294854">
    <property type="protein sequence ID" value="AAM68937.1"/>
    <property type="molecule type" value="Genomic_DNA"/>
</dbReference>
<dbReference type="GO" id="GO:0000786">
    <property type="term" value="C:nucleosome"/>
    <property type="evidence" value="ECO:0007669"/>
    <property type="project" value="UniProtKB-KW"/>
</dbReference>
<dbReference type="GO" id="GO:0005634">
    <property type="term" value="C:nucleus"/>
    <property type="evidence" value="ECO:0007669"/>
    <property type="project" value="UniProtKB-SubCell"/>
</dbReference>
<dbReference type="GO" id="GO:0003677">
    <property type="term" value="F:DNA binding"/>
    <property type="evidence" value="ECO:0007669"/>
    <property type="project" value="UniProtKB-KW"/>
</dbReference>
<dbReference type="GO" id="GO:0030261">
    <property type="term" value="P:chromosome condensation"/>
    <property type="evidence" value="ECO:0007669"/>
    <property type="project" value="UniProtKB-KW"/>
</dbReference>
<dbReference type="GO" id="GO:0035092">
    <property type="term" value="P:sperm DNA condensation"/>
    <property type="evidence" value="ECO:0007669"/>
    <property type="project" value="InterPro"/>
</dbReference>
<dbReference type="InterPro" id="IPR000221">
    <property type="entry name" value="Protamine_P1"/>
</dbReference>
<dbReference type="Pfam" id="PF00260">
    <property type="entry name" value="Protamine_P1"/>
    <property type="match status" value="1"/>
</dbReference>
<dbReference type="PROSITE" id="PS00048">
    <property type="entry name" value="PROTAMINE_P1"/>
    <property type="match status" value="1"/>
</dbReference>
<gene>
    <name type="primary">PRM1</name>
</gene>